<comment type="function">
    <text evidence="2 5">Sodium/ascorbate cotransporter (PubMed:10331392). Mediates electrogenic uptake of vitamin C, with a stoichiometry of 2 Na(+) for each ascorbate (By similarity).</text>
</comment>
<comment type="catalytic activity">
    <reaction evidence="2">
        <text>L-ascorbate(out) + 2 Na(+)(out) = L-ascorbate(in) + 2 Na(+)(in)</text>
        <dbReference type="Rhea" id="RHEA:69883"/>
        <dbReference type="ChEBI" id="CHEBI:29101"/>
        <dbReference type="ChEBI" id="CHEBI:38290"/>
    </reaction>
</comment>
<comment type="subunit">
    <text evidence="2">Interacts with CLSTN3.</text>
</comment>
<comment type="subcellular location">
    <subcellularLocation>
        <location evidence="5">Cell membrane</location>
        <topology evidence="2">Multi-pass membrane protein</topology>
    </subcellularLocation>
</comment>
<comment type="tissue specificity">
    <text evidence="5">Highly expressed in neural, neuroendocrine, exocrine and endothelial tissues and in osteoblasts. Detected in neurons throughout the central nervous system, in meninges and choroid plexus, in the anterior pituitary, the intermediate lobe, in pancreas, adrenal cortex, gastric glands, and in the inner nuclear layer of the retina.</text>
</comment>
<comment type="PTM">
    <text evidence="2">Phosphorylated.</text>
</comment>
<comment type="similarity">
    <text evidence="7">Belongs to the nucleobase:cation symporter-2 (NCS2) (TC 2.A.40) family.</text>
</comment>
<comment type="sequence caution" evidence="7">
    <conflict type="erroneous initiation">
        <sequence resource="EMBL-CDS" id="AAD30368"/>
    </conflict>
</comment>
<keyword id="KW-0106">Calcium</keyword>
<keyword id="KW-0130">Cell adhesion</keyword>
<keyword id="KW-1003">Cell membrane</keyword>
<keyword id="KW-0325">Glycoprotein</keyword>
<keyword id="KW-0406">Ion transport</keyword>
<keyword id="KW-0472">Membrane</keyword>
<keyword id="KW-0597">Phosphoprotein</keyword>
<keyword id="KW-1185">Reference proteome</keyword>
<keyword id="KW-0677">Repeat</keyword>
<keyword id="KW-0915">Sodium</keyword>
<keyword id="KW-0739">Sodium transport</keyword>
<keyword id="KW-0769">Symport</keyword>
<keyword id="KW-0812">Transmembrane</keyword>
<keyword id="KW-1133">Transmembrane helix</keyword>
<keyword id="KW-0813">Transport</keyword>
<organism>
    <name type="scientific">Rattus norvegicus</name>
    <name type="common">Rat</name>
    <dbReference type="NCBI Taxonomy" id="10116"/>
    <lineage>
        <taxon>Eukaryota</taxon>
        <taxon>Metazoa</taxon>
        <taxon>Chordata</taxon>
        <taxon>Craniata</taxon>
        <taxon>Vertebrata</taxon>
        <taxon>Euteleostomi</taxon>
        <taxon>Mammalia</taxon>
        <taxon>Eutheria</taxon>
        <taxon>Euarchontoglires</taxon>
        <taxon>Glires</taxon>
        <taxon>Rodentia</taxon>
        <taxon>Myomorpha</taxon>
        <taxon>Muroidea</taxon>
        <taxon>Muridae</taxon>
        <taxon>Murinae</taxon>
        <taxon>Rattus</taxon>
    </lineage>
</organism>
<evidence type="ECO:0000250" key="1">
    <source>
        <dbReference type="UniProtKB" id="Q9EPR4"/>
    </source>
</evidence>
<evidence type="ECO:0000250" key="2">
    <source>
        <dbReference type="UniProtKB" id="Q9UGH3"/>
    </source>
</evidence>
<evidence type="ECO:0000255" key="3"/>
<evidence type="ECO:0000256" key="4">
    <source>
        <dbReference type="SAM" id="MobiDB-lite"/>
    </source>
</evidence>
<evidence type="ECO:0000269" key="5">
    <source>
    </source>
</evidence>
<evidence type="ECO:0000303" key="6">
    <source>
    </source>
</evidence>
<evidence type="ECO:0000305" key="7"/>
<evidence type="ECO:0007744" key="8">
    <source>
    </source>
</evidence>
<feature type="chain" id="PRO_0000165980" description="Solute carrier family 23 member 2">
    <location>
        <begin position="1"/>
        <end position="647"/>
    </location>
</feature>
<feature type="topological domain" description="Cytoplasmic" evidence="3">
    <location>
        <begin position="8"/>
        <end position="109"/>
    </location>
</feature>
<feature type="transmembrane region" description="Helical" evidence="3">
    <location>
        <begin position="110"/>
        <end position="130"/>
    </location>
</feature>
<feature type="topological domain" description="Extracellular" evidence="3">
    <location>
        <begin position="131"/>
        <end position="138"/>
    </location>
</feature>
<feature type="transmembrane region" description="Helical" evidence="3">
    <location>
        <begin position="139"/>
        <end position="159"/>
    </location>
</feature>
<feature type="topological domain" description="Cytoplasmic" evidence="3">
    <location>
        <position position="160"/>
    </location>
</feature>
<feature type="transmembrane region" description="Helical" evidence="3">
    <location>
        <begin position="161"/>
        <end position="181"/>
    </location>
</feature>
<feature type="topological domain" description="Extracellular" evidence="3">
    <location>
        <begin position="182"/>
        <end position="215"/>
    </location>
</feature>
<feature type="transmembrane region" description="Helical" evidence="3">
    <location>
        <begin position="216"/>
        <end position="236"/>
    </location>
</feature>
<feature type="topological domain" description="Cytoplasmic" evidence="3">
    <location>
        <begin position="237"/>
        <end position="263"/>
    </location>
</feature>
<feature type="transmembrane region" description="Helical" evidence="3">
    <location>
        <begin position="264"/>
        <end position="281"/>
    </location>
</feature>
<feature type="topological domain" description="Extracellular" evidence="3">
    <location>
        <begin position="282"/>
        <end position="285"/>
    </location>
</feature>
<feature type="intramembrane region" description="Helical" evidence="3">
    <location>
        <begin position="286"/>
        <end position="299"/>
    </location>
</feature>
<feature type="topological domain" description="Extracellular" evidence="3">
    <location>
        <begin position="300"/>
        <end position="306"/>
    </location>
</feature>
<feature type="transmembrane region" description="Helical" evidence="3">
    <location>
        <begin position="307"/>
        <end position="327"/>
    </location>
</feature>
<feature type="topological domain" description="Cytoplasmic" evidence="3">
    <location>
        <begin position="328"/>
        <end position="368"/>
    </location>
</feature>
<feature type="transmembrane region" description="Helical" evidence="3">
    <location>
        <begin position="369"/>
        <end position="389"/>
    </location>
</feature>
<feature type="topological domain" description="Extracellular" evidence="3">
    <location>
        <begin position="390"/>
        <end position="414"/>
    </location>
</feature>
<feature type="transmembrane region" description="Helical" evidence="3">
    <location>
        <begin position="415"/>
        <end position="435"/>
    </location>
</feature>
<feature type="topological domain" description="Cytoplasmic" evidence="3">
    <location>
        <begin position="436"/>
        <end position="458"/>
    </location>
</feature>
<feature type="transmembrane region" description="Helical" evidence="3">
    <location>
        <begin position="459"/>
        <end position="479"/>
    </location>
</feature>
<feature type="topological domain" description="Extracellular" evidence="3">
    <location>
        <begin position="480"/>
        <end position="482"/>
    </location>
</feature>
<feature type="transmembrane region" description="Helical" evidence="3">
    <location>
        <begin position="483"/>
        <end position="503"/>
    </location>
</feature>
<feature type="topological domain" description="Cytoplasmic" evidence="3">
    <location>
        <begin position="504"/>
        <end position="513"/>
    </location>
</feature>
<feature type="transmembrane region" description="Helical" evidence="3">
    <location>
        <begin position="514"/>
        <end position="534"/>
    </location>
</feature>
<feature type="topological domain" description="Extracellular" evidence="3">
    <location>
        <begin position="535"/>
        <end position="544"/>
    </location>
</feature>
<feature type="transmembrane region" description="Helical" evidence="3">
    <location>
        <begin position="545"/>
        <end position="565"/>
    </location>
</feature>
<feature type="topological domain" description="Cytoplasmic" evidence="3">
    <location>
        <begin position="566"/>
        <end position="647"/>
    </location>
</feature>
<feature type="region of interest" description="Disordered" evidence="4">
    <location>
        <begin position="1"/>
        <end position="26"/>
    </location>
</feature>
<feature type="compositionally biased region" description="Polar residues" evidence="4">
    <location>
        <begin position="1"/>
        <end position="11"/>
    </location>
</feature>
<feature type="modified residue" description="Phosphoserine" evidence="1">
    <location>
        <position position="69"/>
    </location>
</feature>
<feature type="modified residue" description="Phosphothreonine" evidence="8">
    <location>
        <position position="74"/>
    </location>
</feature>
<feature type="modified residue" description="Phosphoserine" evidence="1">
    <location>
        <position position="77"/>
    </location>
</feature>
<feature type="modified residue" description="Phosphothreonine" evidence="1">
    <location>
        <position position="78"/>
    </location>
</feature>
<feature type="modified residue" description="Phosphoserine" evidence="8">
    <location>
        <position position="80"/>
    </location>
</feature>
<feature type="modified residue" description="Phosphothreonine" evidence="1">
    <location>
        <position position="646"/>
    </location>
</feature>
<feature type="glycosylation site" description="N-linked (GlcNAc...) asparagine" evidence="3">
    <location>
        <position position="187"/>
    </location>
</feature>
<feature type="glycosylation site" description="N-linked (GlcNAc...) asparagine" evidence="3">
    <location>
        <position position="195"/>
    </location>
</feature>
<gene>
    <name type="primary">Slc23a2</name>
    <name evidence="6" type="synonym">Svct2</name>
</gene>
<accession>Q9WTW8</accession>
<sequence>MMGVGKNTSKSVEVGGSTEGKYEEEAKRPDFFTLPVVINGGATSSGEQDNEDTELMAIYTTENGIAEKSSLAETLDSTGSLDPQRSDMIYTIEDVPPWYLCIFLGLQHYLTCFSGTIAVPFLLADAMCVGDDQWATSQLIGTIFFCVGITTLLQTTFGCRLPLFQASAFAFLAPARAILSLDKWKCNTTEITVANGTAELLEHIWHPRIQEIQGAIIMSSLIEVVIGLLGLPGALLRYIGPLTITPTVALIGLSGFQAAGERAGKHWGIAMLTIFLVLLFSQYARNVKFPLPIYKSKKGWTAYKLQLFKMFPIILAILVSWLLCFIFTVTDVFPSNSTDYGYYARTDARKGVLLVAPWFKVPYPFQWGMPTVSAAGVIGMLSAVVASIIESIGDYYACARLSCAPPPPIHAINRGIFVEGLSCVLDGVFGTGNGSTSSSPNIGVLGITKVGSRRVIQYGAALMLGLGMIGKFSALFASLPDPVLGALFCTLFGMITAVGLSNLQFIDLNSSRNLFVLGFSIFFGLVLPSYLRQNPLVTGITGIDQVLNVLLTTAMFVGGCVAFILDNTIPGTPEERGIKKWKKGVSKGNKSLDGMESYNLPFGMNIIKKYRCFSYLPISPTFAGYTWKGFGKSENRRSSDKDSQATV</sequence>
<reference key="1">
    <citation type="journal article" date="1999" name="Nature">
        <title>A family of mammalian Na+-dependent L-ascorbic acid transporters.</title>
        <authorList>
            <person name="Tsukaguchi H."/>
            <person name="Tokui T."/>
            <person name="Mackenzie B."/>
            <person name="Berger U.V."/>
            <person name="Chen X.-Z."/>
            <person name="Wang Y."/>
            <person name="Brubaker R.F."/>
            <person name="Hediger M.A."/>
        </authorList>
    </citation>
    <scope>NUCLEOTIDE SEQUENCE [MRNA]</scope>
    <scope>FUNCTION</scope>
    <scope>SUBCELLULAR LOCATION</scope>
    <scope>TISSUE SPECIFICITY</scope>
    <source>
        <strain>Sprague-Dawley</strain>
    </source>
</reference>
<reference key="2">
    <citation type="journal article" date="2012" name="Nat. Commun.">
        <title>Quantitative maps of protein phosphorylation sites across 14 different rat organs and tissues.</title>
        <authorList>
            <person name="Lundby A."/>
            <person name="Secher A."/>
            <person name="Lage K."/>
            <person name="Nordsborg N.B."/>
            <person name="Dmytriyev A."/>
            <person name="Lundby C."/>
            <person name="Olsen J.V."/>
        </authorList>
    </citation>
    <scope>PHOSPHORYLATION [LARGE SCALE ANALYSIS] AT THR-74 AND SER-80</scope>
    <scope>IDENTIFICATION BY MASS SPECTROMETRY [LARGE SCALE ANALYSIS]</scope>
</reference>
<name>S23A2_RAT</name>
<proteinExistence type="evidence at protein level"/>
<protein>
    <recommendedName>
        <fullName>Solute carrier family 23 member 2</fullName>
    </recommendedName>
    <alternativeName>
        <fullName>Na(+)/L-ascorbic acid transporter 2</fullName>
    </alternativeName>
    <alternativeName>
        <fullName evidence="6">Sodium-dependent vitamin C transporter 2</fullName>
    </alternativeName>
</protein>
<dbReference type="EMBL" id="AF080453">
    <property type="protein sequence ID" value="AAD30368.1"/>
    <property type="status" value="ALT_INIT"/>
    <property type="molecule type" value="mRNA"/>
</dbReference>
<dbReference type="RefSeq" id="NP_059012.2">
    <property type="nucleotide sequence ID" value="NM_017316.2"/>
</dbReference>
<dbReference type="RefSeq" id="XP_006235129.1">
    <property type="nucleotide sequence ID" value="XM_006235067.5"/>
</dbReference>
<dbReference type="RefSeq" id="XP_006235130.1">
    <property type="nucleotide sequence ID" value="XM_006235068.5"/>
</dbReference>
<dbReference type="RefSeq" id="XP_038961663.1">
    <property type="nucleotide sequence ID" value="XM_039105735.2"/>
</dbReference>
<dbReference type="RefSeq" id="XP_063140479.1">
    <property type="nucleotide sequence ID" value="XM_063284409.1"/>
</dbReference>
<dbReference type="SMR" id="Q9WTW8"/>
<dbReference type="FunCoup" id="Q9WTW8">
    <property type="interactions" value="1002"/>
</dbReference>
<dbReference type="STRING" id="10116.ENSRNOP00000028885"/>
<dbReference type="GlyCosmos" id="Q9WTW8">
    <property type="glycosylation" value="2 sites, No reported glycans"/>
</dbReference>
<dbReference type="GlyGen" id="Q9WTW8">
    <property type="glycosylation" value="3 sites"/>
</dbReference>
<dbReference type="iPTMnet" id="Q9WTW8"/>
<dbReference type="PhosphoSitePlus" id="Q9WTW8"/>
<dbReference type="SwissPalm" id="Q9WTW8"/>
<dbReference type="PaxDb" id="10116-ENSRNOP00000028885"/>
<dbReference type="Ensembl" id="ENSRNOT00000028885.5">
    <property type="protein sequence ID" value="ENSRNOP00000028885.2"/>
    <property type="gene ID" value="ENSRNOG00000021262.6"/>
</dbReference>
<dbReference type="GeneID" id="50622"/>
<dbReference type="KEGG" id="rno:50622"/>
<dbReference type="UCSC" id="RGD:619876">
    <property type="organism name" value="rat"/>
</dbReference>
<dbReference type="AGR" id="RGD:619876"/>
<dbReference type="CTD" id="9962"/>
<dbReference type="RGD" id="619876">
    <property type="gene designation" value="Slc23a2"/>
</dbReference>
<dbReference type="eggNOG" id="KOG1292">
    <property type="taxonomic scope" value="Eukaryota"/>
</dbReference>
<dbReference type="GeneTree" id="ENSGT00950000182953"/>
<dbReference type="HOGENOM" id="CLU_017959_5_4_1"/>
<dbReference type="InParanoid" id="Q9WTW8"/>
<dbReference type="OMA" id="MVVSMTE"/>
<dbReference type="OrthoDB" id="1641903at2759"/>
<dbReference type="PhylomeDB" id="Q9WTW8"/>
<dbReference type="TreeFam" id="TF313272"/>
<dbReference type="Reactome" id="R-RNO-196836">
    <property type="pathway name" value="Vitamin C (ascorbate) metabolism"/>
</dbReference>
<dbReference type="PRO" id="PR:Q9WTW8"/>
<dbReference type="Proteomes" id="UP000002494">
    <property type="component" value="Chromosome 3"/>
</dbReference>
<dbReference type="Bgee" id="ENSRNOG00000021262">
    <property type="expression patterns" value="Expressed in stomach and 19 other cell types or tissues"/>
</dbReference>
<dbReference type="GO" id="GO:0016324">
    <property type="term" value="C:apical plasma membrane"/>
    <property type="evidence" value="ECO:0000266"/>
    <property type="project" value="RGD"/>
</dbReference>
<dbReference type="GO" id="GO:0009925">
    <property type="term" value="C:basal plasma membrane"/>
    <property type="evidence" value="ECO:0000314"/>
    <property type="project" value="UniProtKB"/>
</dbReference>
<dbReference type="GO" id="GO:0016323">
    <property type="term" value="C:basolateral plasma membrane"/>
    <property type="evidence" value="ECO:0000266"/>
    <property type="project" value="RGD"/>
</dbReference>
<dbReference type="GO" id="GO:0005737">
    <property type="term" value="C:cytoplasm"/>
    <property type="evidence" value="ECO:0000314"/>
    <property type="project" value="UniProtKB"/>
</dbReference>
<dbReference type="GO" id="GO:0005886">
    <property type="term" value="C:plasma membrane"/>
    <property type="evidence" value="ECO:0000266"/>
    <property type="project" value="RGD"/>
</dbReference>
<dbReference type="GO" id="GO:0008520">
    <property type="term" value="F:L-ascorbate:sodium symporter activity"/>
    <property type="evidence" value="ECO:0000314"/>
    <property type="project" value="RGD"/>
</dbReference>
<dbReference type="GO" id="GO:0015229">
    <property type="term" value="F:L-ascorbic acid transmembrane transporter activity"/>
    <property type="evidence" value="ECO:0000314"/>
    <property type="project" value="UniProtKB"/>
</dbReference>
<dbReference type="GO" id="GO:0008015">
    <property type="term" value="P:blood circulation"/>
    <property type="evidence" value="ECO:0000266"/>
    <property type="project" value="RGD"/>
</dbReference>
<dbReference type="GO" id="GO:0007155">
    <property type="term" value="P:cell adhesion"/>
    <property type="evidence" value="ECO:0007669"/>
    <property type="project" value="UniProtKB-KW"/>
</dbReference>
<dbReference type="GO" id="GO:0071361">
    <property type="term" value="P:cellular response to ethanol"/>
    <property type="evidence" value="ECO:0000270"/>
    <property type="project" value="RGD"/>
</dbReference>
<dbReference type="GO" id="GO:0019852">
    <property type="term" value="P:L-ascorbic acid metabolic process"/>
    <property type="evidence" value="ECO:0000315"/>
    <property type="project" value="RGD"/>
</dbReference>
<dbReference type="GO" id="GO:0015882">
    <property type="term" value="P:L-ascorbic acid transmembrane transport"/>
    <property type="evidence" value="ECO:0000314"/>
    <property type="project" value="UniProtKB"/>
</dbReference>
<dbReference type="GO" id="GO:1903861">
    <property type="term" value="P:positive regulation of dendrite extension"/>
    <property type="evidence" value="ECO:0000315"/>
    <property type="project" value="RGD"/>
</dbReference>
<dbReference type="GO" id="GO:0006979">
    <property type="term" value="P:response to oxidative stress"/>
    <property type="evidence" value="ECO:0000270"/>
    <property type="project" value="RGD"/>
</dbReference>
<dbReference type="InterPro" id="IPR006043">
    <property type="entry name" value="NCS2"/>
</dbReference>
<dbReference type="InterPro" id="IPR006042">
    <property type="entry name" value="Xan_ur_permease"/>
</dbReference>
<dbReference type="PANTHER" id="PTHR11119">
    <property type="entry name" value="XANTHINE-URACIL / VITAMIN C PERMEASE FAMILY MEMBER"/>
    <property type="match status" value="1"/>
</dbReference>
<dbReference type="Pfam" id="PF00860">
    <property type="entry name" value="Xan_ur_permease"/>
    <property type="match status" value="1"/>
</dbReference>
<dbReference type="PROSITE" id="PS01116">
    <property type="entry name" value="XANTH_URACIL_PERMASE"/>
    <property type="match status" value="1"/>
</dbReference>